<name>PTN_BOVIN</name>
<dbReference type="EMBL" id="X52945">
    <property type="protein sequence ID" value="CAA37120.1"/>
    <property type="molecule type" value="mRNA"/>
</dbReference>
<dbReference type="EMBL" id="BC102712">
    <property type="protein sequence ID" value="AAI02713.1"/>
    <property type="molecule type" value="mRNA"/>
</dbReference>
<dbReference type="PIR" id="A37780">
    <property type="entry name" value="A37780"/>
</dbReference>
<dbReference type="RefSeq" id="NP_776380.1">
    <property type="nucleotide sequence ID" value="NM_173955.1"/>
</dbReference>
<dbReference type="RefSeq" id="XP_005205847.1">
    <property type="nucleotide sequence ID" value="XM_005205790.3"/>
</dbReference>
<dbReference type="SMR" id="P21782"/>
<dbReference type="FunCoup" id="P21782">
    <property type="interactions" value="539"/>
</dbReference>
<dbReference type="STRING" id="9913.ENSBTAP00000060515"/>
<dbReference type="PaxDb" id="9913-ENSBTAP00000002983"/>
<dbReference type="GeneID" id="280904"/>
<dbReference type="KEGG" id="bta:280904"/>
<dbReference type="CTD" id="5764"/>
<dbReference type="VEuPathDB" id="HostDB:ENSBTAG00000002317"/>
<dbReference type="eggNOG" id="ENOG502RXV7">
    <property type="taxonomic scope" value="Eukaryota"/>
</dbReference>
<dbReference type="HOGENOM" id="CLU_136864_1_0_1"/>
<dbReference type="InParanoid" id="P21782"/>
<dbReference type="OMA" id="MNGLKQW"/>
<dbReference type="OrthoDB" id="8818336at2759"/>
<dbReference type="TreeFam" id="TF332376"/>
<dbReference type="Reactome" id="R-BTA-201556">
    <property type="pathway name" value="Signaling by ALK"/>
</dbReference>
<dbReference type="Reactome" id="R-BTA-9851151">
    <property type="pathway name" value="MDK and PTN in ALK signaling"/>
</dbReference>
<dbReference type="Proteomes" id="UP000009136">
    <property type="component" value="Chromosome 4"/>
</dbReference>
<dbReference type="Bgee" id="ENSBTAG00000002317">
    <property type="expression patterns" value="Expressed in myometrium and 102 other cell types or tissues"/>
</dbReference>
<dbReference type="GO" id="GO:0005576">
    <property type="term" value="C:extracellular region"/>
    <property type="evidence" value="ECO:0000250"/>
    <property type="project" value="UniProtKB"/>
</dbReference>
<dbReference type="GO" id="GO:0005615">
    <property type="term" value="C:extracellular space"/>
    <property type="evidence" value="ECO:0000250"/>
    <property type="project" value="UniProtKB"/>
</dbReference>
<dbReference type="GO" id="GO:0005886">
    <property type="term" value="C:plasma membrane"/>
    <property type="evidence" value="ECO:0007669"/>
    <property type="project" value="GOC"/>
</dbReference>
<dbReference type="GO" id="GO:0035374">
    <property type="term" value="F:chondroitin sulfate binding"/>
    <property type="evidence" value="ECO:0000250"/>
    <property type="project" value="UniProtKB"/>
</dbReference>
<dbReference type="GO" id="GO:0008083">
    <property type="term" value="F:growth factor activity"/>
    <property type="evidence" value="ECO:0000250"/>
    <property type="project" value="UniProtKB"/>
</dbReference>
<dbReference type="GO" id="GO:0008201">
    <property type="term" value="F:heparin binding"/>
    <property type="evidence" value="ECO:0000250"/>
    <property type="project" value="UniProtKB"/>
</dbReference>
<dbReference type="GO" id="GO:0004864">
    <property type="term" value="F:protein phosphatase inhibitor activity"/>
    <property type="evidence" value="ECO:0000250"/>
    <property type="project" value="UniProtKB"/>
</dbReference>
<dbReference type="GO" id="GO:0046697">
    <property type="term" value="P:decidualization"/>
    <property type="evidence" value="ECO:0000250"/>
    <property type="project" value="UniProtKB"/>
</dbReference>
<dbReference type="GO" id="GO:0140059">
    <property type="term" value="P:dendrite arborization"/>
    <property type="evidence" value="ECO:0000250"/>
    <property type="project" value="UniProtKB"/>
</dbReference>
<dbReference type="GO" id="GO:0031104">
    <property type="term" value="P:dendrite regeneration"/>
    <property type="evidence" value="ECO:0000250"/>
    <property type="project" value="UniProtKB"/>
</dbReference>
<dbReference type="GO" id="GO:0044849">
    <property type="term" value="P:estrous cycle"/>
    <property type="evidence" value="ECO:0000250"/>
    <property type="project" value="UniProtKB"/>
</dbReference>
<dbReference type="GO" id="GO:0007229">
    <property type="term" value="P:integrin-mediated signaling pathway"/>
    <property type="evidence" value="ECO:0000250"/>
    <property type="project" value="UniProtKB"/>
</dbReference>
<dbReference type="GO" id="GO:0007612">
    <property type="term" value="P:learning"/>
    <property type="evidence" value="ECO:0000250"/>
    <property type="project" value="UniProtKB"/>
</dbReference>
<dbReference type="GO" id="GO:0002232">
    <property type="term" value="P:leukocyte chemotaxis involved in inflammatory response"/>
    <property type="evidence" value="ECO:0000250"/>
    <property type="project" value="UniProtKB"/>
</dbReference>
<dbReference type="GO" id="GO:0007613">
    <property type="term" value="P:memory"/>
    <property type="evidence" value="ECO:0000250"/>
    <property type="project" value="UniProtKB"/>
</dbReference>
<dbReference type="GO" id="GO:1900272">
    <property type="term" value="P:negative regulation of long-term synaptic potentiation"/>
    <property type="evidence" value="ECO:0000250"/>
    <property type="project" value="UniProtKB"/>
</dbReference>
<dbReference type="GO" id="GO:0007406">
    <property type="term" value="P:negative regulation of neuroblast proliferation"/>
    <property type="evidence" value="ECO:0000250"/>
    <property type="project" value="UniProtKB"/>
</dbReference>
<dbReference type="GO" id="GO:0048477">
    <property type="term" value="P:oogenesis"/>
    <property type="evidence" value="ECO:0000250"/>
    <property type="project" value="UniProtKB"/>
</dbReference>
<dbReference type="GO" id="GO:0043932">
    <property type="term" value="P:ossification involved in bone remodeling"/>
    <property type="evidence" value="ECO:0000250"/>
    <property type="project" value="UniProtKB"/>
</dbReference>
<dbReference type="GO" id="GO:0048680">
    <property type="term" value="P:positive regulation of axon regeneration"/>
    <property type="evidence" value="ECO:0000250"/>
    <property type="project" value="UniProtKB"/>
</dbReference>
<dbReference type="GO" id="GO:0030501">
    <property type="term" value="P:positive regulation of bone mineralization"/>
    <property type="evidence" value="ECO:0000250"/>
    <property type="project" value="UniProtKB"/>
</dbReference>
<dbReference type="GO" id="GO:0045597">
    <property type="term" value="P:positive regulation of cell differentiation"/>
    <property type="evidence" value="ECO:0000250"/>
    <property type="project" value="UniProtKB"/>
</dbReference>
<dbReference type="GO" id="GO:0051781">
    <property type="term" value="P:positive regulation of cell division"/>
    <property type="evidence" value="ECO:0007669"/>
    <property type="project" value="UniProtKB-KW"/>
</dbReference>
<dbReference type="GO" id="GO:0008284">
    <property type="term" value="P:positive regulation of cell population proliferation"/>
    <property type="evidence" value="ECO:0000250"/>
    <property type="project" value="UniProtKB"/>
</dbReference>
<dbReference type="GO" id="GO:1900006">
    <property type="term" value="P:positive regulation of dendrite development"/>
    <property type="evidence" value="ECO:0000250"/>
    <property type="project" value="UniProtKB"/>
</dbReference>
<dbReference type="GO" id="GO:2000347">
    <property type="term" value="P:positive regulation of hepatocyte proliferation"/>
    <property type="evidence" value="ECO:0000250"/>
    <property type="project" value="UniProtKB"/>
</dbReference>
<dbReference type="GO" id="GO:0002690">
    <property type="term" value="P:positive regulation of leukocyte chemotaxis"/>
    <property type="evidence" value="ECO:0000250"/>
    <property type="project" value="UniProtKB"/>
</dbReference>
<dbReference type="GO" id="GO:0010976">
    <property type="term" value="P:positive regulation of neuron projection development"/>
    <property type="evidence" value="ECO:0000250"/>
    <property type="project" value="UniProtKB"/>
</dbReference>
<dbReference type="GO" id="GO:0048714">
    <property type="term" value="P:positive regulation of oligodendrocyte differentiation"/>
    <property type="evidence" value="ECO:0000250"/>
    <property type="project" value="UniProtKB"/>
</dbReference>
<dbReference type="GO" id="GO:0045778">
    <property type="term" value="P:positive regulation of ossification"/>
    <property type="evidence" value="ECO:0000250"/>
    <property type="project" value="UniProtKB"/>
</dbReference>
<dbReference type="GO" id="GO:2000738">
    <property type="term" value="P:positive regulation of stem cell differentiation"/>
    <property type="evidence" value="ECO:0000250"/>
    <property type="project" value="UniProtKB"/>
</dbReference>
<dbReference type="GO" id="GO:0043113">
    <property type="term" value="P:receptor clustering"/>
    <property type="evidence" value="ECO:0000250"/>
    <property type="project" value="UniProtKB"/>
</dbReference>
<dbReference type="GO" id="GO:0010594">
    <property type="term" value="P:regulation of endothelial cell migration"/>
    <property type="evidence" value="ECO:0000250"/>
    <property type="project" value="UniProtKB"/>
</dbReference>
<dbReference type="GO" id="GO:1903706">
    <property type="term" value="P:regulation of hemopoiesis"/>
    <property type="evidence" value="ECO:0000250"/>
    <property type="project" value="UniProtKB"/>
</dbReference>
<dbReference type="GO" id="GO:0031641">
    <property type="term" value="P:regulation of myelination"/>
    <property type="evidence" value="ECO:0000250"/>
    <property type="project" value="UniProtKB"/>
</dbReference>
<dbReference type="GO" id="GO:2000036">
    <property type="term" value="P:regulation of stem cell population maintenance"/>
    <property type="evidence" value="ECO:0000250"/>
    <property type="project" value="UniProtKB"/>
</dbReference>
<dbReference type="GO" id="GO:0048167">
    <property type="term" value="P:regulation of synaptic plasticity"/>
    <property type="evidence" value="ECO:0000250"/>
    <property type="project" value="UniProtKB"/>
</dbReference>
<dbReference type="GO" id="GO:0010996">
    <property type="term" value="P:response to auditory stimulus"/>
    <property type="evidence" value="ECO:0000250"/>
    <property type="project" value="UniProtKB"/>
</dbReference>
<dbReference type="GO" id="GO:0042246">
    <property type="term" value="P:tissue regeneration"/>
    <property type="evidence" value="ECO:0000250"/>
    <property type="project" value="UniProtKB"/>
</dbReference>
<dbReference type="FunFam" id="2.20.60.10:FF:000001">
    <property type="entry name" value="Pleiotrophin"/>
    <property type="match status" value="1"/>
</dbReference>
<dbReference type="FunFam" id="2.30.90.10:FF:000001">
    <property type="entry name" value="Pleiotrophin"/>
    <property type="match status" value="1"/>
</dbReference>
<dbReference type="Gene3D" id="2.30.90.10">
    <property type="entry name" value="Heparin-binding Growth Factor, Midkine, Chain A- C-terminal Domain"/>
    <property type="match status" value="1"/>
</dbReference>
<dbReference type="Gene3D" id="2.20.60.10">
    <property type="entry name" value="Pleiotrophin/Midkine, N-terminal domain"/>
    <property type="match status" value="1"/>
</dbReference>
<dbReference type="InterPro" id="IPR000762">
    <property type="entry name" value="Midkine_heparin-bd_GF"/>
</dbReference>
<dbReference type="InterPro" id="IPR020090">
    <property type="entry name" value="PTN/MK_C_dom"/>
</dbReference>
<dbReference type="InterPro" id="IPR038130">
    <property type="entry name" value="PTN/MK_C_dom_sf"/>
</dbReference>
<dbReference type="InterPro" id="IPR020091">
    <property type="entry name" value="PTN/MK_diS_sf"/>
</dbReference>
<dbReference type="InterPro" id="IPR020089">
    <property type="entry name" value="PTN/MK_N_dom"/>
</dbReference>
<dbReference type="InterPro" id="IPR037122">
    <property type="entry name" value="PTN/MK_N_dom_sf"/>
</dbReference>
<dbReference type="InterPro" id="IPR020092">
    <property type="entry name" value="PTN_MK_heparin-bd_GF_CS"/>
</dbReference>
<dbReference type="PANTHER" id="PTHR13850:SF1">
    <property type="entry name" value="PLEIOTROPHIN"/>
    <property type="match status" value="1"/>
</dbReference>
<dbReference type="PANTHER" id="PTHR13850">
    <property type="entry name" value="PLEIOTROPHIN FAMILY MEMBER"/>
    <property type="match status" value="1"/>
</dbReference>
<dbReference type="Pfam" id="PF01091">
    <property type="entry name" value="PTN_MK_C"/>
    <property type="match status" value="1"/>
</dbReference>
<dbReference type="Pfam" id="PF05196">
    <property type="entry name" value="PTN_MK_N"/>
    <property type="match status" value="1"/>
</dbReference>
<dbReference type="PRINTS" id="PR00269">
    <property type="entry name" value="PTNMIDKINE"/>
</dbReference>
<dbReference type="SMART" id="SM00193">
    <property type="entry name" value="PTN"/>
    <property type="match status" value="1"/>
</dbReference>
<dbReference type="SUPFAM" id="SSF57288">
    <property type="entry name" value="Midkine"/>
    <property type="match status" value="2"/>
</dbReference>
<dbReference type="PROSITE" id="PS00619">
    <property type="entry name" value="PTN_MK_1"/>
    <property type="match status" value="1"/>
</dbReference>
<dbReference type="PROSITE" id="PS00620">
    <property type="entry name" value="PTN_MK_2"/>
    <property type="match status" value="1"/>
</dbReference>
<reference key="1">
    <citation type="journal article" date="1990" name="Science">
        <title>Cloning and expression of a developmentally regulated protein that induces mitogenic and neurite outgrowth activity.</title>
        <authorList>
            <person name="Li Y.-S."/>
            <person name="Milner P.G."/>
            <person name="Chauhan A.K."/>
            <person name="Watson M.A."/>
            <person name="Hoffman R.M."/>
            <person name="Kodner C.M."/>
            <person name="Milbrandt J."/>
            <person name="Deuel T.F."/>
        </authorList>
    </citation>
    <scope>NUCLEOTIDE SEQUENCE [MRNA]</scope>
    <source>
        <tissue>Uterus</tissue>
    </source>
</reference>
<reference key="2">
    <citation type="submission" date="2005-08" db="EMBL/GenBank/DDBJ databases">
        <authorList>
            <consortium name="NIH - Mammalian Gene Collection (MGC) project"/>
        </authorList>
    </citation>
    <scope>NUCLEOTIDE SEQUENCE [LARGE SCALE MRNA]</scope>
    <source>
        <strain>Crossbred X Angus</strain>
        <tissue>Liver</tissue>
    </source>
</reference>
<reference key="3">
    <citation type="journal article" date="1992" name="Mol. Biol. Cell">
        <title>Structural and functional characterization of full-length heparin-binding growth associated molecule.</title>
        <authorList>
            <person name="Hampton B.S."/>
            <person name="Marshak D.R."/>
            <person name="Burgess W.H."/>
        </authorList>
    </citation>
    <scope>PROTEIN SEQUENCE OF 33-168</scope>
    <scope>FUNCTION</scope>
    <scope>MASS SPECTROMETRY</scope>
    <source>
        <tissue>Brain</tissue>
    </source>
</reference>
<reference key="4">
    <citation type="journal article" date="1990" name="J. Biol. Chem.">
        <title>Amino acid sequence and characterization of a heparin-binding neurite-promoting factor (p18) from bovine brain.</title>
        <authorList>
            <person name="Kuo M.-D."/>
            <person name="Oda Y."/>
            <person name="Huang J.S."/>
            <person name="Huang S.S."/>
        </authorList>
    </citation>
    <scope>PROTEIN SEQUENCE OF 33-151</scope>
    <source>
        <tissue>Brain</tissue>
    </source>
</reference>
<reference key="5">
    <citation type="journal article" date="1989" name="Biochem. Biophys. Res. Commun.">
        <title>A novel 17 kD heparin-binding growth factor (HBGF-8) in bovine uterus: purification and N-terminal amino acid sequence.</title>
        <authorList>
            <person name="Milner P.G."/>
            <person name="Yue-Sheng L."/>
            <person name="Hoffman R.M."/>
            <person name="Kodner C.M."/>
            <person name="Siegel N.R."/>
            <person name="Deuel T.F."/>
        </authorList>
    </citation>
    <scope>PROTEIN SEQUENCE OF 33-57</scope>
    <source>
        <tissue>Uterus</tissue>
    </source>
</reference>
<reference key="6">
    <citation type="journal article" date="1993" name="Biochem. Biophys. Res. Commun.">
        <title>Comparison of the disulfide bond arrangements of human recombinant and bovine brain heparin binding neurite-promoting factors.</title>
        <authorList>
            <person name="Hulmes J.D."/>
            <person name="Seddon A.P."/>
            <person name="Decker M.M."/>
            <person name="Bohlen P."/>
        </authorList>
    </citation>
    <scope>DISULFIDE BONDS</scope>
</reference>
<organism>
    <name type="scientific">Bos taurus</name>
    <name type="common">Bovine</name>
    <dbReference type="NCBI Taxonomy" id="9913"/>
    <lineage>
        <taxon>Eukaryota</taxon>
        <taxon>Metazoa</taxon>
        <taxon>Chordata</taxon>
        <taxon>Craniata</taxon>
        <taxon>Vertebrata</taxon>
        <taxon>Euteleostomi</taxon>
        <taxon>Mammalia</taxon>
        <taxon>Eutheria</taxon>
        <taxon>Laurasiatheria</taxon>
        <taxon>Artiodactyla</taxon>
        <taxon>Ruminantia</taxon>
        <taxon>Pecora</taxon>
        <taxon>Bovidae</taxon>
        <taxon>Bovinae</taxon>
        <taxon>Bos</taxon>
    </lineage>
</organism>
<sequence>MQTPQYLQQRRKFAAAFLAFIFILAAVDTAEAGKKEKPEKKVKKSDCGEWQWSVCVPTSGDCGLGTREGTRTGAECKQTMKTQRCKIPCNWKKQFGAECKYQFQAWGECDLNTALKTRTGSLKRALHNADCQKTVTISKPCGKLTKSKPQAESKKKKKEGKKQEKMLD</sequence>
<keyword id="KW-0903">Direct protein sequencing</keyword>
<keyword id="KW-1015">Disulfide bond</keyword>
<keyword id="KW-0339">Growth factor</keyword>
<keyword id="KW-0358">Heparin-binding</keyword>
<keyword id="KW-0497">Mitogen</keyword>
<keyword id="KW-1185">Reference proteome</keyword>
<keyword id="KW-0964">Secreted</keyword>
<keyword id="KW-0732">Signal</keyword>
<accession>P21782</accession>
<accession>P20157</accession>
<accession>Q3SZU1</accession>
<evidence type="ECO:0000250" key="1">
    <source>
        <dbReference type="UniProtKB" id="P21246"/>
    </source>
</evidence>
<evidence type="ECO:0000250" key="2">
    <source>
        <dbReference type="UniProtKB" id="P63089"/>
    </source>
</evidence>
<evidence type="ECO:0000250" key="3">
    <source>
        <dbReference type="UniProtKB" id="P63090"/>
    </source>
</evidence>
<evidence type="ECO:0000256" key="4">
    <source>
        <dbReference type="SAM" id="MobiDB-lite"/>
    </source>
</evidence>
<evidence type="ECO:0000269" key="5">
    <source>
    </source>
</evidence>
<evidence type="ECO:0000269" key="6">
    <source>
    </source>
</evidence>
<evidence type="ECO:0000269" key="7">
    <source>
    </source>
</evidence>
<evidence type="ECO:0000269" key="8">
    <source>
    </source>
</evidence>
<evidence type="ECO:0000303" key="9">
    <source>
    </source>
</evidence>
<evidence type="ECO:0000303" key="10">
    <source>
    </source>
</evidence>
<evidence type="ECO:0000303" key="11">
    <source>
    </source>
</evidence>
<evidence type="ECO:0000303" key="12">
    <source>
    </source>
</evidence>
<evidence type="ECO:0000305" key="13"/>
<feature type="signal peptide" evidence="5 6 7">
    <location>
        <begin position="1"/>
        <end position="32"/>
    </location>
</feature>
<feature type="chain" id="PRO_0000024658" description="Pleiotrophin">
    <location>
        <begin position="33"/>
        <end position="168"/>
    </location>
</feature>
<feature type="region of interest" description="Chondroitin sulfate binding" evidence="1">
    <location>
        <begin position="92"/>
        <end position="99"/>
    </location>
</feature>
<feature type="region of interest" description="Chondroitin sulfate binding" evidence="1">
    <location>
        <begin position="123"/>
        <end position="131"/>
    </location>
</feature>
<feature type="region of interest" description="Disordered" evidence="4">
    <location>
        <begin position="141"/>
        <end position="168"/>
    </location>
</feature>
<feature type="region of interest" description="Chondroitin sulfate A binding" evidence="1">
    <location>
        <begin position="147"/>
        <end position="168"/>
    </location>
</feature>
<feature type="disulfide bond" evidence="8">
    <location>
        <begin position="47"/>
        <end position="76"/>
    </location>
</feature>
<feature type="disulfide bond" evidence="8">
    <location>
        <begin position="55"/>
        <end position="85"/>
    </location>
</feature>
<feature type="disulfide bond" evidence="8">
    <location>
        <begin position="62"/>
        <end position="89"/>
    </location>
</feature>
<feature type="disulfide bond" evidence="8">
    <location>
        <begin position="99"/>
        <end position="131"/>
    </location>
</feature>
<feature type="disulfide bond" evidence="8">
    <location>
        <begin position="109"/>
        <end position="141"/>
    </location>
</feature>
<feature type="sequence conflict" description="In Ref. 4; AA sequence." evidence="13" ref="4">
    <original>Q</original>
    <variation>E</variation>
    <location>
        <position position="78"/>
    </location>
</feature>
<feature type="sequence conflict" description="In Ref. 2; AAI02713." evidence="13" ref="2">
    <location>
        <position position="151"/>
    </location>
</feature>
<proteinExistence type="evidence at protein level"/>
<comment type="function">
    <text evidence="1 2 3 5">Secreted growth factor that mediates its signal through cell-surface proteoglycan and non-proteoglycan receptors. Binds cell-surface proteoglycan receptor via their chondroitin sulfate (CS) groups. Thereby regulates many processes like cell proliferation, cell survival, cell growth, cell differentiation and cell migration in several tissues namely neuron and bone (By similarity) (PubMed:1550956). Also plays a role in synaptic plasticity and learning-related behavior by inhibiting long-term synaptic potentiation (By similarity). Binds PTPRZ1, leading to neutralization of the negative charges of the CS chains of PTPRZ1, inducing PTPRZ1 clustering, thereby causing the dimerization and inactivation of its phosphatase activity leading to increased tyrosine phosphorylation of each of the PTPRZ1 substrates like ALK, CTNNB1 or AFAP1L2 in order to activate the PI3K-AKT pathway. Through PTPRZ1 binding controls oligodendrocyte precursor cell differentiation by enhancing the phosphorylation of AFAP1L2 in order to activate the PI3K-AKT pathway. Forms a complex with PTPRZ1 and integrin alpha-V/beta-3 (ITGAV:ITGB3) that stimulates endothelial cell migration through SRC dephosphorylation and activation that consequently leads to ITGB3 'Tyr-773' phosphorylation (By similarity). In adult hippocampus promotes dendritic arborization, spine development, and functional integration and connectivity of newborn granule neurons through ALK by activating AKT signaling pathway (By similarity). Binds GPC2 and chondroitin sulfate proteoglycans (CSPGs) at the neuron surface, leading to abrogation of binding between PTPRS and CSPGs and neurite outgrowth promotion. Binds SDC3 and mediates bone formation by recruiting and attaching osteoblasts/osteoblast precursors to the sites for new bone deposition (By similarity). Binds ALK and promotes cell survival and cell proliferation through MAPK pathway activation (By similarity). Inhibits proliferation and enhances differentiation of neural stem cells by inhibiting FGF2-induced fibroblast growth factor receptor signaling pathway. Mediates regulatory mechanisms in normal hemostasis and in hematopoietic regeneration and in maintaining the balance of myeloid and lymphoid regeneration. In addition may play a role in the female reproductive system, auditory response and the progesterone-induced decidualization pathway (By similarity).</text>
</comment>
<comment type="subunit">
    <text evidence="1 3">Interacts with ALK and NEK6. Interacts with PTPRZ1 (via chondroitin sulfate groups); promotes formation of homooligomers; oligomerization impairs tyrosine phosphatase activity. Forms a complex with PTPRZ1 and CTNNB1; this complex inactivates PTPRZ1 protein tyrosine phosphatase activity through PTN interaction and stimulates tyrosine phosphorylation of CTNNB1. Interacts with ITGB3 and ITGA5. Forms a complex with PTPRZ1 and integrin alpha-V/beta-3 (ITGAV:ITGB3) that stimulates endothelial cell migration through ITGB3 'Tyr-773' phosphorylation (By similarity). Interacts with SDC3 (via heparan sulfate chains); this interaction mediates the neurite outgrowth-promoting signal from PTN to the cytoskeleton of growing neurites; this interaction mediates osteoblast recruitment. Interacts with GPC2 (via heparan sulfate); this interaction promotes neurite outgrowth through binding of PTN with chondroitin sulfate of proteoglycans, thereby releasing PTPRS of chondroitin sulfate proteoglycans (CSPGs) and leading to binding with heparan sulfate of GPC2 (By similarity).</text>
</comment>
<comment type="subcellular location">
    <subcellularLocation>
        <location evidence="1">Secreted</location>
    </subcellularLocation>
</comment>
<comment type="PTM">
    <text evidence="1">Phosphorylated by NEK6.</text>
</comment>
<comment type="mass spectrometry"/>
<comment type="similarity">
    <text evidence="13">Belongs to the pleiotrophin family.</text>
</comment>
<protein>
    <recommendedName>
        <fullName evidence="11">Pleiotrophin</fullName>
        <shortName evidence="11">PTN</shortName>
    </recommendedName>
    <alternativeName>
        <fullName evidence="1">Heparin-binding brain mitogen</fullName>
        <shortName evidence="1">HBBM</shortName>
    </alternativeName>
    <alternativeName>
        <fullName evidence="12">Heparin-binding growth factor 8</fullName>
        <shortName evidence="12">HBGF-8</shortName>
    </alternativeName>
    <alternativeName>
        <fullName evidence="9">Heparin-binding growth-associated molecule</fullName>
        <shortName evidence="9">HB-GAM</shortName>
    </alternativeName>
    <alternativeName>
        <fullName evidence="10">Heparin-binding neurite-promoting factor</fullName>
    </alternativeName>
    <alternativeName>
        <fullName evidence="10">p18</fullName>
    </alternativeName>
</protein>
<gene>
    <name evidence="1" type="primary">PTN</name>
</gene>